<organismHost>
    <name type="scientific">Cenchrus echinatus</name>
    <dbReference type="NCBI Taxonomy" id="173841"/>
</organismHost>
<organismHost>
    <name type="scientific">Saccharum officinarum</name>
    <name type="common">Sugarcane</name>
    <dbReference type="NCBI Taxonomy" id="4547"/>
</organismHost>
<sequence length="314" mass="34940">MSTVGSTVSSTPSRRFKHRNVNTFLTYSRCPLEPEAVGLHIWSLIAHWTPVYVLSVRETHEDGGYHIHVLAQSAKPVYTTDSGFFDIDGFHPNIQSAKSANKVRAYAMKNPVTYWERGTFIPRKTSFLGDSTEPNSKKQSKDDIVRDIIEHSTNKQEYLSMIQKALPYEWATKLQYFEYSANKLFPDIQEIYTSPFPQSTPALLDPTAINTWLENNLYQVSPSAYMLANPSCLTLEEATSDLIWMHETSRTLIPTGSSACTSSGQQEQASPPGPGAWEDIITGRTTSTGPPTTRTQNTTSSTTYPSSTVHAGSN</sequence>
<protein>
    <recommendedName>
        <fullName>Replication-associated protein A</fullName>
        <shortName>RepA</shortName>
        <ecNumber>3.1.21.-</ecNumber>
    </recommendedName>
</protein>
<proteinExistence type="inferred from homology"/>
<feature type="chain" id="PRO_0000316944" description="Replication-associated protein A">
    <location>
        <begin position="1"/>
        <end position="314"/>
    </location>
</feature>
<feature type="domain" description="CRESS-DNA virus Rep endonuclease" evidence="2">
    <location>
        <begin position="17"/>
        <end position="120"/>
    </location>
</feature>
<feature type="region of interest" description="Oligomerization" evidence="1">
    <location>
        <begin position="180"/>
        <end position="192"/>
    </location>
</feature>
<feature type="region of interest" description="Disordered" evidence="3">
    <location>
        <begin position="255"/>
        <end position="314"/>
    </location>
</feature>
<feature type="short sequence motif" description="RCR-1" evidence="2">
    <location>
        <begin position="24"/>
        <end position="27"/>
    </location>
</feature>
<feature type="short sequence motif" description="RCR-2" evidence="2">
    <location>
        <begin position="66"/>
        <end position="68"/>
    </location>
</feature>
<feature type="short sequence motif" description="RCR-3" evidence="2">
    <location>
        <begin position="106"/>
        <end position="109"/>
    </location>
</feature>
<feature type="compositionally biased region" description="Polar residues" evidence="3">
    <location>
        <begin position="255"/>
        <end position="269"/>
    </location>
</feature>
<feature type="compositionally biased region" description="Low complexity" evidence="3">
    <location>
        <begin position="282"/>
        <end position="308"/>
    </location>
</feature>
<feature type="active site" description="For DNA cleavage activity" evidence="2">
    <location>
        <position position="106"/>
    </location>
</feature>
<feature type="binding site" evidence="2">
    <location>
        <position position="58"/>
    </location>
    <ligand>
        <name>a divalent metal cation</name>
        <dbReference type="ChEBI" id="CHEBI:60240"/>
    </ligand>
</feature>
<feature type="binding site" evidence="2">
    <location>
        <position position="66"/>
    </location>
    <ligand>
        <name>a divalent metal cation</name>
        <dbReference type="ChEBI" id="CHEBI:60240"/>
    </ligand>
</feature>
<feature type="binding site" evidence="2">
    <location>
        <position position="68"/>
    </location>
    <ligand>
        <name>a divalent metal cation</name>
        <dbReference type="ChEBI" id="CHEBI:60240"/>
    </ligand>
</feature>
<feature type="binding site" evidence="2">
    <location>
        <position position="110"/>
    </location>
    <ligand>
        <name>a divalent metal cation</name>
        <dbReference type="ChEBI" id="CHEBI:60240"/>
    </ligand>
</feature>
<dbReference type="EC" id="3.1.21.-"/>
<dbReference type="EMBL" id="M82918">
    <property type="protein sequence ID" value="AAA47830.1"/>
    <property type="molecule type" value="Genomic_DNA"/>
</dbReference>
<dbReference type="EMBL" id="S64567">
    <property type="protein sequence ID" value="AAP13957.1"/>
    <property type="molecule type" value="Genomic_DNA"/>
</dbReference>
<dbReference type="SMR" id="Q89822"/>
<dbReference type="Proteomes" id="UP000007230">
    <property type="component" value="Genome"/>
</dbReference>
<dbReference type="Proteomes" id="UP000204673">
    <property type="component" value="Genome"/>
</dbReference>
<dbReference type="GO" id="GO:0030430">
    <property type="term" value="C:host cell cytoplasm"/>
    <property type="evidence" value="ECO:0007669"/>
    <property type="project" value="UniProtKB-SubCell"/>
</dbReference>
<dbReference type="GO" id="GO:0042025">
    <property type="term" value="C:host cell nucleus"/>
    <property type="evidence" value="ECO:0007669"/>
    <property type="project" value="UniProtKB-SubCell"/>
</dbReference>
<dbReference type="GO" id="GO:0003677">
    <property type="term" value="F:DNA binding"/>
    <property type="evidence" value="ECO:0007669"/>
    <property type="project" value="UniProtKB-KW"/>
</dbReference>
<dbReference type="GO" id="GO:0016888">
    <property type="term" value="F:endodeoxyribonuclease activity, producing 5'-phosphomonoesters"/>
    <property type="evidence" value="ECO:0007669"/>
    <property type="project" value="InterPro"/>
</dbReference>
<dbReference type="GO" id="GO:0046872">
    <property type="term" value="F:metal ion binding"/>
    <property type="evidence" value="ECO:0007669"/>
    <property type="project" value="UniProtKB-KW"/>
</dbReference>
<dbReference type="GO" id="GO:0000166">
    <property type="term" value="F:nucleotide binding"/>
    <property type="evidence" value="ECO:0007669"/>
    <property type="project" value="UniProtKB-KW"/>
</dbReference>
<dbReference type="GO" id="GO:0016779">
    <property type="term" value="F:nucleotidyltransferase activity"/>
    <property type="evidence" value="ECO:0007669"/>
    <property type="project" value="UniProtKB-KW"/>
</dbReference>
<dbReference type="GO" id="GO:0005198">
    <property type="term" value="F:structural molecule activity"/>
    <property type="evidence" value="ECO:0007669"/>
    <property type="project" value="InterPro"/>
</dbReference>
<dbReference type="GO" id="GO:0006260">
    <property type="term" value="P:DNA replication"/>
    <property type="evidence" value="ECO:0007669"/>
    <property type="project" value="UniProtKB-KW"/>
</dbReference>
<dbReference type="GO" id="GO:0039645">
    <property type="term" value="P:symbiont-mediated perturbation of host cell cycle G1/S transition checkpoint"/>
    <property type="evidence" value="ECO:0007669"/>
    <property type="project" value="UniProtKB-KW"/>
</dbReference>
<dbReference type="Gene3D" id="3.40.1310.20">
    <property type="match status" value="1"/>
</dbReference>
<dbReference type="InterPro" id="IPR049912">
    <property type="entry name" value="CRESS_DNA_REP"/>
</dbReference>
<dbReference type="InterPro" id="IPR001146">
    <property type="entry name" value="Gemini_AL1_MSV"/>
</dbReference>
<dbReference type="InterPro" id="IPR001191">
    <property type="entry name" value="Gemini_AL1_REP"/>
</dbReference>
<dbReference type="InterPro" id="IPR022692">
    <property type="entry name" value="Gemini_AL1_REP_central"/>
</dbReference>
<dbReference type="Pfam" id="PF00799">
    <property type="entry name" value="Gemini_AL1"/>
    <property type="match status" value="1"/>
</dbReference>
<dbReference type="Pfam" id="PF08283">
    <property type="entry name" value="Gemini_AL1_M"/>
    <property type="match status" value="1"/>
</dbReference>
<dbReference type="PRINTS" id="PR00227">
    <property type="entry name" value="GEMCOATAL1"/>
</dbReference>
<dbReference type="PRINTS" id="PR00229">
    <property type="entry name" value="GEMCOATMSVL1"/>
</dbReference>
<dbReference type="SUPFAM" id="SSF55464">
    <property type="entry name" value="Origin of replication-binding domain, RBD-like"/>
    <property type="match status" value="1"/>
</dbReference>
<dbReference type="PROSITE" id="PS52020">
    <property type="entry name" value="CRESS_DNA_REP"/>
    <property type="match status" value="1"/>
</dbReference>
<comment type="function">
    <text evidence="1">Implicated in enhancement of V-sense gene expression. Acts a an inhibitor of C-sense gene transcription (By similarity).</text>
</comment>
<comment type="cofactor">
    <cofactor evidence="2">
        <name>Mg(2+)</name>
        <dbReference type="ChEBI" id="CHEBI:18420"/>
    </cofactor>
    <cofactor evidence="2">
        <name>Mn(2+)</name>
        <dbReference type="ChEBI" id="CHEBI:29035"/>
    </cofactor>
    <text evidence="2">Divalent metal cations, possibly Mg(2+) or Mn(2+).</text>
</comment>
<comment type="subunit">
    <text evidence="1">Homooligomer. Part of the C- and V-complexes which are RepA-Rep-DNA complexes involved in the c-sense and v-sense transcription (By similarity).</text>
</comment>
<comment type="subcellular location">
    <subcellularLocation>
        <location evidence="1">Host nucleus</location>
    </subcellularLocation>
    <subcellularLocation>
        <location evidence="1">Host cytoplasm</location>
    </subcellularLocation>
</comment>
<comment type="alternative products">
    <event type="alternative splicing"/>
    <isoform>
        <id>Q89822-1</id>
        <name>RepA</name>
        <sequence type="displayed"/>
    </isoform>
    <isoform>
        <id>Q80GM6-1</id>
        <name>Rep</name>
        <sequence type="external"/>
    </isoform>
</comment>
<comment type="domain">
    <text>There are 3 rolling circle replication (RCR) motifs. RCR-2 may be involved in metal coordination. RCR-3 is required for phosphodiester bond cleavage for initiation of RCR.</text>
</comment>
<comment type="domain">
    <text evidence="1">The LXCXE motif specifically binds to host RBR1.</text>
</comment>
<comment type="miscellaneous">
    <molecule>Isoform RepA</molecule>
    <text>Produced from the unspliced transcript.</text>
</comment>
<comment type="similarity">
    <text evidence="4">Belongs to the geminiviridae Rep protein family.</text>
</comment>
<name>REPA_SSVN</name>
<reference key="1">
    <citation type="thesis" date="1991" institute="University of Cape Town" country="South Africa">
        <title>Molecular investigations of subgroup 1 geminiviruses.</title>
        <authorList>
            <person name="Hughes F.L."/>
        </authorList>
    </citation>
    <scope>NUCLEOTIDE SEQUENCE [GENOMIC DNA]</scope>
</reference>
<reference key="2">
    <citation type="journal article" date="1993" name="Arch. Virol.">
        <title>Complete nucleotide sequence of sugarcane streak Monogeminivirus.</title>
        <authorList>
            <person name="Hughes F.L."/>
            <person name="Rybicki E.P."/>
            <person name="Kirby R."/>
        </authorList>
    </citation>
    <scope>NUCLEOTIDE SEQUENCE [GENOMIC DNA]</scope>
</reference>
<gene>
    <name type="ORF">C1</name>
</gene>
<organism>
    <name type="scientific">Sugarcane streak virus (isolate South Africa)</name>
    <name type="common">SSV</name>
    <name type="synonym">Sugarcane streak virus (isolate Natal)</name>
    <dbReference type="NCBI Taxonomy" id="268781"/>
    <lineage>
        <taxon>Viruses</taxon>
        <taxon>Monodnaviria</taxon>
        <taxon>Shotokuvirae</taxon>
        <taxon>Cressdnaviricota</taxon>
        <taxon>Repensiviricetes</taxon>
        <taxon>Geplafuvirales</taxon>
        <taxon>Geminiviridae</taxon>
        <taxon>Mastrevirus</taxon>
        <taxon>Sugarcane streak virus</taxon>
    </lineage>
</organism>
<accession>Q89822</accession>
<keyword id="KW-0010">Activator</keyword>
<keyword id="KW-0025">Alternative splicing</keyword>
<keyword id="KW-0190">Covalent protein-DNA linkage</keyword>
<keyword id="KW-0235">DNA replication</keyword>
<keyword id="KW-0238">DNA-binding</keyword>
<keyword id="KW-0255">Endonuclease</keyword>
<keyword id="KW-1078">G1/S host cell cycle checkpoint dysregulation by virus</keyword>
<keyword id="KW-1035">Host cytoplasm</keyword>
<keyword id="KW-1048">Host nucleus</keyword>
<keyword id="KW-0945">Host-virus interaction</keyword>
<keyword id="KW-0378">Hydrolase</keyword>
<keyword id="KW-0479">Metal-binding</keyword>
<keyword id="KW-1121">Modulation of host cell cycle by virus</keyword>
<keyword id="KW-0540">Nuclease</keyword>
<keyword id="KW-0547">Nucleotide-binding</keyword>
<keyword id="KW-0548">Nucleotidyltransferase</keyword>
<keyword id="KW-1185">Reference proteome</keyword>
<keyword id="KW-0678">Repressor</keyword>
<keyword id="KW-0808">Transferase</keyword>
<evidence type="ECO:0000250" key="1"/>
<evidence type="ECO:0000255" key="2">
    <source>
        <dbReference type="PROSITE-ProRule" id="PRU01364"/>
    </source>
</evidence>
<evidence type="ECO:0000256" key="3">
    <source>
        <dbReference type="SAM" id="MobiDB-lite"/>
    </source>
</evidence>
<evidence type="ECO:0000305" key="4"/>